<accession>Q182Y7</accession>
<name>MURD_CLOD6</name>
<dbReference type="EC" id="6.3.2.9" evidence="1"/>
<dbReference type="EMBL" id="AM180355">
    <property type="protein sequence ID" value="CAJ69539.1"/>
    <property type="molecule type" value="Genomic_DNA"/>
</dbReference>
<dbReference type="RefSeq" id="WP_004454967.1">
    <property type="nucleotide sequence ID" value="NZ_JAUPES010000012.1"/>
</dbReference>
<dbReference type="RefSeq" id="YP_001089164.1">
    <property type="nucleotide sequence ID" value="NC_009089.1"/>
</dbReference>
<dbReference type="SMR" id="Q182Y7"/>
<dbReference type="STRING" id="272563.CD630_26530"/>
<dbReference type="EnsemblBacteria" id="CAJ69539">
    <property type="protein sequence ID" value="CAJ69539"/>
    <property type="gene ID" value="CD630_26530"/>
</dbReference>
<dbReference type="KEGG" id="cdf:CD630_26530"/>
<dbReference type="KEGG" id="pdc:CDIF630_02907"/>
<dbReference type="PATRIC" id="fig|272563.120.peg.2796"/>
<dbReference type="eggNOG" id="COG0771">
    <property type="taxonomic scope" value="Bacteria"/>
</dbReference>
<dbReference type="OrthoDB" id="9809796at2"/>
<dbReference type="PhylomeDB" id="Q182Y7"/>
<dbReference type="BioCyc" id="PDIF272563:G12WB-2804-MONOMER"/>
<dbReference type="UniPathway" id="UPA00219"/>
<dbReference type="Proteomes" id="UP000001978">
    <property type="component" value="Chromosome"/>
</dbReference>
<dbReference type="GO" id="GO:0005737">
    <property type="term" value="C:cytoplasm"/>
    <property type="evidence" value="ECO:0007669"/>
    <property type="project" value="UniProtKB-SubCell"/>
</dbReference>
<dbReference type="GO" id="GO:0005524">
    <property type="term" value="F:ATP binding"/>
    <property type="evidence" value="ECO:0007669"/>
    <property type="project" value="UniProtKB-UniRule"/>
</dbReference>
<dbReference type="GO" id="GO:0008764">
    <property type="term" value="F:UDP-N-acetylmuramoylalanine-D-glutamate ligase activity"/>
    <property type="evidence" value="ECO:0007669"/>
    <property type="project" value="UniProtKB-UniRule"/>
</dbReference>
<dbReference type="GO" id="GO:0051301">
    <property type="term" value="P:cell division"/>
    <property type="evidence" value="ECO:0007669"/>
    <property type="project" value="UniProtKB-KW"/>
</dbReference>
<dbReference type="GO" id="GO:0071555">
    <property type="term" value="P:cell wall organization"/>
    <property type="evidence" value="ECO:0007669"/>
    <property type="project" value="UniProtKB-KW"/>
</dbReference>
<dbReference type="GO" id="GO:0009252">
    <property type="term" value="P:peptidoglycan biosynthetic process"/>
    <property type="evidence" value="ECO:0007669"/>
    <property type="project" value="UniProtKB-UniRule"/>
</dbReference>
<dbReference type="GO" id="GO:0008360">
    <property type="term" value="P:regulation of cell shape"/>
    <property type="evidence" value="ECO:0007669"/>
    <property type="project" value="UniProtKB-KW"/>
</dbReference>
<dbReference type="Gene3D" id="3.90.190.20">
    <property type="entry name" value="Mur ligase, C-terminal domain"/>
    <property type="match status" value="1"/>
</dbReference>
<dbReference type="Gene3D" id="3.40.1190.10">
    <property type="entry name" value="Mur-like, catalytic domain"/>
    <property type="match status" value="1"/>
</dbReference>
<dbReference type="Gene3D" id="3.40.50.720">
    <property type="entry name" value="NAD(P)-binding Rossmann-like Domain"/>
    <property type="match status" value="1"/>
</dbReference>
<dbReference type="HAMAP" id="MF_00639">
    <property type="entry name" value="MurD"/>
    <property type="match status" value="1"/>
</dbReference>
<dbReference type="InterPro" id="IPR036565">
    <property type="entry name" value="Mur-like_cat_sf"/>
</dbReference>
<dbReference type="InterPro" id="IPR004101">
    <property type="entry name" value="Mur_ligase_C"/>
</dbReference>
<dbReference type="InterPro" id="IPR036615">
    <property type="entry name" value="Mur_ligase_C_dom_sf"/>
</dbReference>
<dbReference type="InterPro" id="IPR013221">
    <property type="entry name" value="Mur_ligase_cen"/>
</dbReference>
<dbReference type="InterPro" id="IPR005762">
    <property type="entry name" value="MurD"/>
</dbReference>
<dbReference type="NCBIfam" id="TIGR01087">
    <property type="entry name" value="murD"/>
    <property type="match status" value="1"/>
</dbReference>
<dbReference type="PANTHER" id="PTHR43692">
    <property type="entry name" value="UDP-N-ACETYLMURAMOYLALANINE--D-GLUTAMATE LIGASE"/>
    <property type="match status" value="1"/>
</dbReference>
<dbReference type="PANTHER" id="PTHR43692:SF1">
    <property type="entry name" value="UDP-N-ACETYLMURAMOYLALANINE--D-GLUTAMATE LIGASE"/>
    <property type="match status" value="1"/>
</dbReference>
<dbReference type="Pfam" id="PF02875">
    <property type="entry name" value="Mur_ligase_C"/>
    <property type="match status" value="1"/>
</dbReference>
<dbReference type="Pfam" id="PF08245">
    <property type="entry name" value="Mur_ligase_M"/>
    <property type="match status" value="1"/>
</dbReference>
<dbReference type="Pfam" id="PF21799">
    <property type="entry name" value="MurD-like_N"/>
    <property type="match status" value="1"/>
</dbReference>
<dbReference type="SUPFAM" id="SSF51984">
    <property type="entry name" value="MurCD N-terminal domain"/>
    <property type="match status" value="1"/>
</dbReference>
<dbReference type="SUPFAM" id="SSF53623">
    <property type="entry name" value="MurD-like peptide ligases, catalytic domain"/>
    <property type="match status" value="1"/>
</dbReference>
<dbReference type="SUPFAM" id="SSF53244">
    <property type="entry name" value="MurD-like peptide ligases, peptide-binding domain"/>
    <property type="match status" value="1"/>
</dbReference>
<protein>
    <recommendedName>
        <fullName evidence="1">UDP-N-acetylmuramoylalanine--D-glutamate ligase</fullName>
        <ecNumber evidence="1">6.3.2.9</ecNumber>
    </recommendedName>
    <alternativeName>
        <fullName evidence="1">D-glutamic acid-adding enzyme</fullName>
    </alternativeName>
    <alternativeName>
        <fullName evidence="1">UDP-N-acetylmuramoyl-L-alanyl-D-glutamate synthetase</fullName>
    </alternativeName>
</protein>
<comment type="function">
    <text evidence="1">Cell wall formation. Catalyzes the addition of glutamate to the nucleotide precursor UDP-N-acetylmuramoyl-L-alanine (UMA).</text>
</comment>
<comment type="catalytic activity">
    <reaction evidence="1">
        <text>UDP-N-acetyl-alpha-D-muramoyl-L-alanine + D-glutamate + ATP = UDP-N-acetyl-alpha-D-muramoyl-L-alanyl-D-glutamate + ADP + phosphate + H(+)</text>
        <dbReference type="Rhea" id="RHEA:16429"/>
        <dbReference type="ChEBI" id="CHEBI:15378"/>
        <dbReference type="ChEBI" id="CHEBI:29986"/>
        <dbReference type="ChEBI" id="CHEBI:30616"/>
        <dbReference type="ChEBI" id="CHEBI:43474"/>
        <dbReference type="ChEBI" id="CHEBI:83898"/>
        <dbReference type="ChEBI" id="CHEBI:83900"/>
        <dbReference type="ChEBI" id="CHEBI:456216"/>
        <dbReference type="EC" id="6.3.2.9"/>
    </reaction>
</comment>
<comment type="pathway">
    <text evidence="1">Cell wall biogenesis; peptidoglycan biosynthesis.</text>
</comment>
<comment type="subcellular location">
    <subcellularLocation>
        <location evidence="1">Cytoplasm</location>
    </subcellularLocation>
</comment>
<comment type="similarity">
    <text evidence="1">Belongs to the MurCDEF family.</text>
</comment>
<gene>
    <name evidence="1" type="primary">murD</name>
    <name type="ordered locus">CD630_26530</name>
</gene>
<proteinExistence type="inferred from homology"/>
<keyword id="KW-0067">ATP-binding</keyword>
<keyword id="KW-0131">Cell cycle</keyword>
<keyword id="KW-0132">Cell division</keyword>
<keyword id="KW-0133">Cell shape</keyword>
<keyword id="KW-0961">Cell wall biogenesis/degradation</keyword>
<keyword id="KW-0963">Cytoplasm</keyword>
<keyword id="KW-0436">Ligase</keyword>
<keyword id="KW-0547">Nucleotide-binding</keyword>
<keyword id="KW-0573">Peptidoglycan synthesis</keyword>
<keyword id="KW-1185">Reference proteome</keyword>
<evidence type="ECO:0000255" key="1">
    <source>
        <dbReference type="HAMAP-Rule" id="MF_00639"/>
    </source>
</evidence>
<organism>
    <name type="scientific">Clostridioides difficile (strain 630)</name>
    <name type="common">Peptoclostridium difficile</name>
    <dbReference type="NCBI Taxonomy" id="272563"/>
    <lineage>
        <taxon>Bacteria</taxon>
        <taxon>Bacillati</taxon>
        <taxon>Bacillota</taxon>
        <taxon>Clostridia</taxon>
        <taxon>Peptostreptococcales</taxon>
        <taxon>Peptostreptococcaceae</taxon>
        <taxon>Clostridioides</taxon>
    </lineage>
</organism>
<reference key="1">
    <citation type="journal article" date="2006" name="Nat. Genet.">
        <title>The multidrug-resistant human pathogen Clostridium difficile has a highly mobile, mosaic genome.</title>
        <authorList>
            <person name="Sebaihia M."/>
            <person name="Wren B.W."/>
            <person name="Mullany P."/>
            <person name="Fairweather N.F."/>
            <person name="Minton N."/>
            <person name="Stabler R."/>
            <person name="Thomson N.R."/>
            <person name="Roberts A.P."/>
            <person name="Cerdeno-Tarraga A.M."/>
            <person name="Wang H."/>
            <person name="Holden M.T.G."/>
            <person name="Wright A."/>
            <person name="Churcher C."/>
            <person name="Quail M.A."/>
            <person name="Baker S."/>
            <person name="Bason N."/>
            <person name="Brooks K."/>
            <person name="Chillingworth T."/>
            <person name="Cronin A."/>
            <person name="Davis P."/>
            <person name="Dowd L."/>
            <person name="Fraser A."/>
            <person name="Feltwell T."/>
            <person name="Hance Z."/>
            <person name="Holroyd S."/>
            <person name="Jagels K."/>
            <person name="Moule S."/>
            <person name="Mungall K."/>
            <person name="Price C."/>
            <person name="Rabbinowitsch E."/>
            <person name="Sharp S."/>
            <person name="Simmonds M."/>
            <person name="Stevens K."/>
            <person name="Unwin L."/>
            <person name="Whithead S."/>
            <person name="Dupuy B."/>
            <person name="Dougan G."/>
            <person name="Barrell B."/>
            <person name="Parkhill J."/>
        </authorList>
    </citation>
    <scope>NUCLEOTIDE SEQUENCE [LARGE SCALE GENOMIC DNA]</scope>
    <source>
        <strain>630</strain>
    </source>
</reference>
<feature type="chain" id="PRO_0000257180" description="UDP-N-acetylmuramoylalanine--D-glutamate ligase">
    <location>
        <begin position="1"/>
        <end position="451"/>
    </location>
</feature>
<feature type="binding site" evidence="1">
    <location>
        <begin position="116"/>
        <end position="122"/>
    </location>
    <ligand>
        <name>ATP</name>
        <dbReference type="ChEBI" id="CHEBI:30616"/>
    </ligand>
</feature>
<sequence>MDLKGKKVLLVGLAKTGISTIKHLDKLGASIIVNDIKDENKLRNILDELKSINDIKYILGHHPEDVDDIDMVVVSPGVPLDLPFILKLKNSGKYIIGEVELAFKLSNNPIFIGITGTNGKTTTTSLVGEIFSRAKRDTYVVGNIGNPVIDTIETSSEESVLVTELSSFQLESIDEFRPKVSAILNITEDHLNRHHTMEKYIEAKANIFMNQTVEDFCVLNYDDEIVKSLADKCNAKVIYFSRTKKVNGGVYLENNDIIIDIDDKIKFLNKDDVSLPGGHNLENCMAAIAIAYVCKIDLEVIKDVLMTFKGVEHRQEFVRNLDNVIYVNDSKGTNPDSTIKAIQSYDRPIILIAGGMDKGSNFDELLETAKSYVKSLVLLGETASNIENCAKNKGFNDIHIVKDMEEAVKTSYEISKSGDIVLLSPACASWDMYESFEVRGKDFKDNVNNLK</sequence>